<accession>Q9PM41</accession>
<accession>Q0P7Z4</accession>
<protein>
    <recommendedName>
        <fullName evidence="1">Chorismate synthase</fullName>
        <shortName evidence="1">CS</shortName>
        <ecNumber evidence="1">4.2.3.5</ecNumber>
    </recommendedName>
    <alternativeName>
        <fullName evidence="1">5-enolpyruvylshikimate-3-phosphate phospholyase</fullName>
    </alternativeName>
</protein>
<dbReference type="EC" id="4.2.3.5" evidence="1"/>
<dbReference type="EMBL" id="AL111168">
    <property type="protein sequence ID" value="CAL35731.1"/>
    <property type="molecule type" value="Genomic_DNA"/>
</dbReference>
<dbReference type="PIR" id="H81259">
    <property type="entry name" value="H81259"/>
</dbReference>
<dbReference type="RefSeq" id="WP_002851463.1">
    <property type="nucleotide sequence ID" value="NZ_SZUC01000002.1"/>
</dbReference>
<dbReference type="RefSeq" id="YP_002345003.1">
    <property type="nucleotide sequence ID" value="NC_002163.1"/>
</dbReference>
<dbReference type="PDB" id="1SQ1">
    <property type="method" value="X-ray"/>
    <property type="resolution" value="2.80 A"/>
    <property type="chains" value="A=1-362"/>
</dbReference>
<dbReference type="PDBsum" id="1SQ1"/>
<dbReference type="SMR" id="Q9PM41"/>
<dbReference type="IntAct" id="Q9PM41">
    <property type="interactions" value="92"/>
</dbReference>
<dbReference type="STRING" id="192222.Cj1634c"/>
<dbReference type="PaxDb" id="192222-Cj1634c"/>
<dbReference type="EnsemblBacteria" id="CAL35731">
    <property type="protein sequence ID" value="CAL35731"/>
    <property type="gene ID" value="Cj1634c"/>
</dbReference>
<dbReference type="GeneID" id="905907"/>
<dbReference type="KEGG" id="cje:Cj1634c"/>
<dbReference type="PATRIC" id="fig|192222.6.peg.1610"/>
<dbReference type="eggNOG" id="COG0082">
    <property type="taxonomic scope" value="Bacteria"/>
</dbReference>
<dbReference type="HOGENOM" id="CLU_034547_0_2_7"/>
<dbReference type="OrthoDB" id="9771806at2"/>
<dbReference type="UniPathway" id="UPA00053">
    <property type="reaction ID" value="UER00090"/>
</dbReference>
<dbReference type="EvolutionaryTrace" id="Q9PM41"/>
<dbReference type="Proteomes" id="UP000000799">
    <property type="component" value="Chromosome"/>
</dbReference>
<dbReference type="GO" id="GO:0005829">
    <property type="term" value="C:cytosol"/>
    <property type="evidence" value="ECO:0007669"/>
    <property type="project" value="TreeGrafter"/>
</dbReference>
<dbReference type="GO" id="GO:0004107">
    <property type="term" value="F:chorismate synthase activity"/>
    <property type="evidence" value="ECO:0007669"/>
    <property type="project" value="UniProtKB-UniRule"/>
</dbReference>
<dbReference type="GO" id="GO:0010181">
    <property type="term" value="F:FMN binding"/>
    <property type="evidence" value="ECO:0007669"/>
    <property type="project" value="TreeGrafter"/>
</dbReference>
<dbReference type="GO" id="GO:0008652">
    <property type="term" value="P:amino acid biosynthetic process"/>
    <property type="evidence" value="ECO:0007669"/>
    <property type="project" value="UniProtKB-KW"/>
</dbReference>
<dbReference type="GO" id="GO:0009073">
    <property type="term" value="P:aromatic amino acid family biosynthetic process"/>
    <property type="evidence" value="ECO:0007669"/>
    <property type="project" value="UniProtKB-KW"/>
</dbReference>
<dbReference type="GO" id="GO:0009423">
    <property type="term" value="P:chorismate biosynthetic process"/>
    <property type="evidence" value="ECO:0007669"/>
    <property type="project" value="UniProtKB-UniRule"/>
</dbReference>
<dbReference type="CDD" id="cd07304">
    <property type="entry name" value="Chorismate_synthase"/>
    <property type="match status" value="1"/>
</dbReference>
<dbReference type="Gene3D" id="3.60.150.10">
    <property type="entry name" value="Chorismate synthase AroC"/>
    <property type="match status" value="1"/>
</dbReference>
<dbReference type="HAMAP" id="MF_00300">
    <property type="entry name" value="Chorismate_synth"/>
    <property type="match status" value="1"/>
</dbReference>
<dbReference type="InterPro" id="IPR000453">
    <property type="entry name" value="Chorismate_synth"/>
</dbReference>
<dbReference type="InterPro" id="IPR035904">
    <property type="entry name" value="Chorismate_synth_AroC_sf"/>
</dbReference>
<dbReference type="InterPro" id="IPR020541">
    <property type="entry name" value="Chorismate_synthase_CS"/>
</dbReference>
<dbReference type="NCBIfam" id="TIGR00033">
    <property type="entry name" value="aroC"/>
    <property type="match status" value="1"/>
</dbReference>
<dbReference type="NCBIfam" id="NF003793">
    <property type="entry name" value="PRK05382.1"/>
    <property type="match status" value="1"/>
</dbReference>
<dbReference type="PANTHER" id="PTHR21085">
    <property type="entry name" value="CHORISMATE SYNTHASE"/>
    <property type="match status" value="1"/>
</dbReference>
<dbReference type="PANTHER" id="PTHR21085:SF0">
    <property type="entry name" value="CHORISMATE SYNTHASE"/>
    <property type="match status" value="1"/>
</dbReference>
<dbReference type="Pfam" id="PF01264">
    <property type="entry name" value="Chorismate_synt"/>
    <property type="match status" value="1"/>
</dbReference>
<dbReference type="PIRSF" id="PIRSF001456">
    <property type="entry name" value="Chorismate_synth"/>
    <property type="match status" value="1"/>
</dbReference>
<dbReference type="SUPFAM" id="SSF103263">
    <property type="entry name" value="Chorismate synthase, AroC"/>
    <property type="match status" value="1"/>
</dbReference>
<dbReference type="PROSITE" id="PS00787">
    <property type="entry name" value="CHORISMATE_SYNTHASE_1"/>
    <property type="match status" value="1"/>
</dbReference>
<dbReference type="PROSITE" id="PS00788">
    <property type="entry name" value="CHORISMATE_SYNTHASE_2"/>
    <property type="match status" value="1"/>
</dbReference>
<gene>
    <name evidence="1" type="primary">aroC</name>
    <name type="ordered locus">Cj1634c</name>
</gene>
<feature type="chain" id="PRO_0000140568" description="Chorismate synthase">
    <location>
        <begin position="1"/>
        <end position="362"/>
    </location>
</feature>
<feature type="binding site" evidence="1">
    <location>
        <position position="46"/>
    </location>
    <ligand>
        <name>NADP(+)</name>
        <dbReference type="ChEBI" id="CHEBI:58349"/>
    </ligand>
</feature>
<feature type="binding site" evidence="1">
    <location>
        <begin position="122"/>
        <end position="124"/>
    </location>
    <ligand>
        <name>FMN</name>
        <dbReference type="ChEBI" id="CHEBI:58210"/>
    </ligand>
</feature>
<feature type="binding site" evidence="1">
    <location>
        <begin position="238"/>
        <end position="239"/>
    </location>
    <ligand>
        <name>FMN</name>
        <dbReference type="ChEBI" id="CHEBI:58210"/>
    </ligand>
</feature>
<feature type="binding site" evidence="1">
    <location>
        <position position="278"/>
    </location>
    <ligand>
        <name>FMN</name>
        <dbReference type="ChEBI" id="CHEBI:58210"/>
    </ligand>
</feature>
<feature type="binding site" evidence="1">
    <location>
        <begin position="293"/>
        <end position="297"/>
    </location>
    <ligand>
        <name>FMN</name>
        <dbReference type="ChEBI" id="CHEBI:58210"/>
    </ligand>
</feature>
<feature type="binding site" evidence="1">
    <location>
        <position position="319"/>
    </location>
    <ligand>
        <name>FMN</name>
        <dbReference type="ChEBI" id="CHEBI:58210"/>
    </ligand>
</feature>
<feature type="strand" evidence="2">
    <location>
        <begin position="6"/>
        <end position="13"/>
    </location>
</feature>
<feature type="helix" evidence="2">
    <location>
        <begin position="16"/>
        <end position="18"/>
    </location>
</feature>
<feature type="strand" evidence="2">
    <location>
        <begin position="21"/>
        <end position="26"/>
    </location>
</feature>
<feature type="helix" evidence="2">
    <location>
        <begin position="36"/>
        <end position="45"/>
    </location>
</feature>
<feature type="strand" evidence="2">
    <location>
        <begin position="62"/>
        <end position="64"/>
    </location>
</feature>
<feature type="strand" evidence="2">
    <location>
        <begin position="66"/>
        <end position="69"/>
    </location>
</feature>
<feature type="strand" evidence="2">
    <location>
        <begin position="78"/>
        <end position="82"/>
    </location>
</feature>
<feature type="helix" evidence="2">
    <location>
        <begin position="128"/>
        <end position="143"/>
    </location>
</feature>
<feature type="turn" evidence="2">
    <location>
        <begin position="144"/>
        <end position="146"/>
    </location>
</feature>
<feature type="strand" evidence="2">
    <location>
        <begin position="148"/>
        <end position="156"/>
    </location>
</feature>
<feature type="helix" evidence="2">
    <location>
        <begin position="165"/>
        <end position="167"/>
    </location>
</feature>
<feature type="helix" evidence="2">
    <location>
        <begin position="170"/>
        <end position="175"/>
    </location>
</feature>
<feature type="turn" evidence="2">
    <location>
        <begin position="183"/>
        <end position="185"/>
    </location>
</feature>
<feature type="helix" evidence="2">
    <location>
        <begin position="186"/>
        <end position="198"/>
    </location>
</feature>
<feature type="strand" evidence="2">
    <location>
        <begin position="205"/>
        <end position="213"/>
    </location>
</feature>
<feature type="turn" evidence="2">
    <location>
        <begin position="221"/>
        <end position="223"/>
    </location>
</feature>
<feature type="helix" evidence="2">
    <location>
        <begin position="226"/>
        <end position="235"/>
    </location>
</feature>
<feature type="strand" evidence="2">
    <location>
        <begin position="240"/>
        <end position="245"/>
    </location>
</feature>
<feature type="helix" evidence="2">
    <location>
        <begin position="248"/>
        <end position="253"/>
    </location>
</feature>
<feature type="helix" evidence="2">
    <location>
        <begin position="256"/>
        <end position="259"/>
    </location>
</feature>
<feature type="strand" evidence="2">
    <location>
        <begin position="264"/>
        <end position="267"/>
    </location>
</feature>
<feature type="strand" evidence="2">
    <location>
        <begin position="275"/>
        <end position="277"/>
    </location>
</feature>
<feature type="strand" evidence="2">
    <location>
        <begin position="280"/>
        <end position="284"/>
    </location>
</feature>
<feature type="strand" evidence="2">
    <location>
        <begin position="286"/>
        <end position="292"/>
    </location>
</feature>
<feature type="helix" evidence="2">
    <location>
        <begin position="325"/>
        <end position="346"/>
    </location>
</feature>
<feature type="helix" evidence="2">
    <location>
        <begin position="348"/>
        <end position="350"/>
    </location>
</feature>
<feature type="helix" evidence="2">
    <location>
        <begin position="352"/>
        <end position="358"/>
    </location>
</feature>
<keyword id="KW-0002">3D-structure</keyword>
<keyword id="KW-0028">Amino-acid biosynthesis</keyword>
<keyword id="KW-0057">Aromatic amino acid biosynthesis</keyword>
<keyword id="KW-0274">FAD</keyword>
<keyword id="KW-0285">Flavoprotein</keyword>
<keyword id="KW-0288">FMN</keyword>
<keyword id="KW-0456">Lyase</keyword>
<keyword id="KW-0521">NADP</keyword>
<keyword id="KW-1185">Reference proteome</keyword>
<reference key="1">
    <citation type="journal article" date="2000" name="Nature">
        <title>The genome sequence of the food-borne pathogen Campylobacter jejuni reveals hypervariable sequences.</title>
        <authorList>
            <person name="Parkhill J."/>
            <person name="Wren B.W."/>
            <person name="Mungall K.L."/>
            <person name="Ketley J.M."/>
            <person name="Churcher C.M."/>
            <person name="Basham D."/>
            <person name="Chillingworth T."/>
            <person name="Davies R.M."/>
            <person name="Feltwell T."/>
            <person name="Holroyd S."/>
            <person name="Jagels K."/>
            <person name="Karlyshev A.V."/>
            <person name="Moule S."/>
            <person name="Pallen M.J."/>
            <person name="Penn C.W."/>
            <person name="Quail M.A."/>
            <person name="Rajandream M.A."/>
            <person name="Rutherford K.M."/>
            <person name="van Vliet A.H.M."/>
            <person name="Whitehead S."/>
            <person name="Barrell B.G."/>
        </authorList>
    </citation>
    <scope>NUCLEOTIDE SEQUENCE [LARGE SCALE GENOMIC DNA]</scope>
    <source>
        <strain>ATCC 700819 / NCTC 11168</strain>
    </source>
</reference>
<proteinExistence type="evidence at protein level"/>
<evidence type="ECO:0000255" key="1">
    <source>
        <dbReference type="HAMAP-Rule" id="MF_00300"/>
    </source>
</evidence>
<evidence type="ECO:0007829" key="2">
    <source>
        <dbReference type="PDB" id="1SQ1"/>
    </source>
</evidence>
<sequence length="362" mass="39252">MNTFGTRLKFTSFGESHGVAVGCIIDGMPAGVKFDEEFLQNELDKRKGGSKFATPRKESDKAQVLSGVFEGYTTGHPIAIVVFNENAHSKDYDNLKDLFRPAHADFTYFYKYGIRDHRGGGRSSARESVARVAGGAVAAMLLREFDICVQSGVFGVGTFVSNLKEEEFDFEFAKKSEIFCLDPKLESDFKNEILNARNSKDSVGAAVFTKVSGMLIGLGEVLYDKLDSKLAHALMGINAVKAVEIGEGINASKMRGSCNNDALKDGKFLSNHSGGILGGISNGENLILKTYFKPTPSIFAKQESIDKFGNNLKFELKGRHDPCVGVRGSVVASAMVRLVLADCLLLNASANLNNLKNAYGLK</sequence>
<name>AROC_CAMJE</name>
<comment type="function">
    <text evidence="1">Catalyzes the anti-1,4-elimination of the C-3 phosphate and the C-6 proR hydrogen from 5-enolpyruvylshikimate-3-phosphate (EPSP) to yield chorismate, which is the branch point compound that serves as the starting substrate for the three terminal pathways of aromatic amino acid biosynthesis. This reaction introduces a second double bond into the aromatic ring system.</text>
</comment>
<comment type="catalytic activity">
    <reaction evidence="1">
        <text>5-O-(1-carboxyvinyl)-3-phosphoshikimate = chorismate + phosphate</text>
        <dbReference type="Rhea" id="RHEA:21020"/>
        <dbReference type="ChEBI" id="CHEBI:29748"/>
        <dbReference type="ChEBI" id="CHEBI:43474"/>
        <dbReference type="ChEBI" id="CHEBI:57701"/>
        <dbReference type="EC" id="4.2.3.5"/>
    </reaction>
</comment>
<comment type="cofactor">
    <cofactor evidence="1">
        <name>FMNH2</name>
        <dbReference type="ChEBI" id="CHEBI:57618"/>
    </cofactor>
    <text evidence="1">Reduced FMN (FMNH(2)).</text>
</comment>
<comment type="pathway">
    <text evidence="1">Metabolic intermediate biosynthesis; chorismate biosynthesis; chorismate from D-erythrose 4-phosphate and phosphoenolpyruvate: step 7/7.</text>
</comment>
<comment type="subunit">
    <text evidence="1">Homotetramer.</text>
</comment>
<comment type="similarity">
    <text evidence="1">Belongs to the chorismate synthase family.</text>
</comment>
<organism>
    <name type="scientific">Campylobacter jejuni subsp. jejuni serotype O:2 (strain ATCC 700819 / NCTC 11168)</name>
    <dbReference type="NCBI Taxonomy" id="192222"/>
    <lineage>
        <taxon>Bacteria</taxon>
        <taxon>Pseudomonadati</taxon>
        <taxon>Campylobacterota</taxon>
        <taxon>Epsilonproteobacteria</taxon>
        <taxon>Campylobacterales</taxon>
        <taxon>Campylobacteraceae</taxon>
        <taxon>Campylobacter</taxon>
    </lineage>
</organism>